<accession>Q0HNM4</accession>
<comment type="function">
    <text evidence="1">Catalyzes the phosphorolysis of diverse nucleosides, yielding D-ribose 1-phosphate and the respective free bases. Can use uridine, adenosine, guanosine, cytidine, thymidine, inosine and xanthosine as substrates. Also catalyzes the reverse reactions.</text>
</comment>
<comment type="catalytic activity">
    <reaction evidence="1">
        <text>a purine D-ribonucleoside + phosphate = a purine nucleobase + alpha-D-ribose 1-phosphate</text>
        <dbReference type="Rhea" id="RHEA:19805"/>
        <dbReference type="ChEBI" id="CHEBI:26386"/>
        <dbReference type="ChEBI" id="CHEBI:43474"/>
        <dbReference type="ChEBI" id="CHEBI:57720"/>
        <dbReference type="ChEBI" id="CHEBI:142355"/>
        <dbReference type="EC" id="2.4.2.1"/>
    </reaction>
</comment>
<comment type="catalytic activity">
    <reaction evidence="1">
        <text>adenosine + phosphate = alpha-D-ribose 1-phosphate + adenine</text>
        <dbReference type="Rhea" id="RHEA:27642"/>
        <dbReference type="ChEBI" id="CHEBI:16335"/>
        <dbReference type="ChEBI" id="CHEBI:16708"/>
        <dbReference type="ChEBI" id="CHEBI:43474"/>
        <dbReference type="ChEBI" id="CHEBI:57720"/>
        <dbReference type="EC" id="2.4.2.1"/>
    </reaction>
</comment>
<comment type="catalytic activity">
    <reaction evidence="1">
        <text>cytidine + phosphate = cytosine + alpha-D-ribose 1-phosphate</text>
        <dbReference type="Rhea" id="RHEA:52540"/>
        <dbReference type="ChEBI" id="CHEBI:16040"/>
        <dbReference type="ChEBI" id="CHEBI:17562"/>
        <dbReference type="ChEBI" id="CHEBI:43474"/>
        <dbReference type="ChEBI" id="CHEBI:57720"/>
        <dbReference type="EC" id="2.4.2.2"/>
    </reaction>
</comment>
<comment type="catalytic activity">
    <reaction evidence="1">
        <text>guanosine + phosphate = alpha-D-ribose 1-phosphate + guanine</text>
        <dbReference type="Rhea" id="RHEA:13233"/>
        <dbReference type="ChEBI" id="CHEBI:16235"/>
        <dbReference type="ChEBI" id="CHEBI:16750"/>
        <dbReference type="ChEBI" id="CHEBI:43474"/>
        <dbReference type="ChEBI" id="CHEBI:57720"/>
        <dbReference type="EC" id="2.4.2.1"/>
    </reaction>
</comment>
<comment type="catalytic activity">
    <reaction evidence="1">
        <text>inosine + phosphate = alpha-D-ribose 1-phosphate + hypoxanthine</text>
        <dbReference type="Rhea" id="RHEA:27646"/>
        <dbReference type="ChEBI" id="CHEBI:17368"/>
        <dbReference type="ChEBI" id="CHEBI:17596"/>
        <dbReference type="ChEBI" id="CHEBI:43474"/>
        <dbReference type="ChEBI" id="CHEBI:57720"/>
        <dbReference type="EC" id="2.4.2.1"/>
    </reaction>
</comment>
<comment type="catalytic activity">
    <reaction evidence="1">
        <text>thymidine + phosphate = 2-deoxy-alpha-D-ribose 1-phosphate + thymine</text>
        <dbReference type="Rhea" id="RHEA:16037"/>
        <dbReference type="ChEBI" id="CHEBI:17748"/>
        <dbReference type="ChEBI" id="CHEBI:17821"/>
        <dbReference type="ChEBI" id="CHEBI:43474"/>
        <dbReference type="ChEBI" id="CHEBI:57259"/>
        <dbReference type="EC" id="2.4.2.2"/>
    </reaction>
</comment>
<comment type="catalytic activity">
    <reaction evidence="1">
        <text>uridine + phosphate = alpha-D-ribose 1-phosphate + uracil</text>
        <dbReference type="Rhea" id="RHEA:24388"/>
        <dbReference type="ChEBI" id="CHEBI:16704"/>
        <dbReference type="ChEBI" id="CHEBI:17568"/>
        <dbReference type="ChEBI" id="CHEBI:43474"/>
        <dbReference type="ChEBI" id="CHEBI:57720"/>
        <dbReference type="EC" id="2.4.2.2"/>
    </reaction>
</comment>
<comment type="catalytic activity">
    <reaction evidence="1">
        <text>xanthosine + phosphate = alpha-D-ribose 1-phosphate + xanthine</text>
        <dbReference type="Rhea" id="RHEA:27638"/>
        <dbReference type="ChEBI" id="CHEBI:17712"/>
        <dbReference type="ChEBI" id="CHEBI:18107"/>
        <dbReference type="ChEBI" id="CHEBI:43474"/>
        <dbReference type="ChEBI" id="CHEBI:57720"/>
        <dbReference type="EC" id="2.4.2.1"/>
    </reaction>
</comment>
<comment type="similarity">
    <text evidence="1">Belongs to the nucleoside phosphorylase PpnP family.</text>
</comment>
<feature type="chain" id="PRO_0000298726" description="Pyrimidine/purine nucleoside phosphorylase">
    <location>
        <begin position="1"/>
        <end position="103"/>
    </location>
</feature>
<sequence>MELIEQVSVAKKANIYFEGKVASRSVFFNDGSKQTLGVVLPGEYEFSTSQGEIMQVTSGSFEVLLPDSTTWQTFSEGSQFELVANASFKIRNSAIAEYCCSYL</sequence>
<reference key="1">
    <citation type="submission" date="2006-08" db="EMBL/GenBank/DDBJ databases">
        <title>Complete sequence of Shewanella sp. MR-4.</title>
        <authorList>
            <consortium name="US DOE Joint Genome Institute"/>
            <person name="Copeland A."/>
            <person name="Lucas S."/>
            <person name="Lapidus A."/>
            <person name="Barry K."/>
            <person name="Detter J.C."/>
            <person name="Glavina del Rio T."/>
            <person name="Hammon N."/>
            <person name="Israni S."/>
            <person name="Dalin E."/>
            <person name="Tice H."/>
            <person name="Pitluck S."/>
            <person name="Kiss H."/>
            <person name="Brettin T."/>
            <person name="Bruce D."/>
            <person name="Han C."/>
            <person name="Tapia R."/>
            <person name="Gilna P."/>
            <person name="Schmutz J."/>
            <person name="Larimer F."/>
            <person name="Land M."/>
            <person name="Hauser L."/>
            <person name="Kyrpides N."/>
            <person name="Mikhailova N."/>
            <person name="Nealson K."/>
            <person name="Konstantinidis K."/>
            <person name="Klappenbach J."/>
            <person name="Tiedje J."/>
            <person name="Richardson P."/>
        </authorList>
    </citation>
    <scope>NUCLEOTIDE SEQUENCE [LARGE SCALE GENOMIC DNA]</scope>
    <source>
        <strain>MR-4</strain>
    </source>
</reference>
<organism>
    <name type="scientific">Shewanella sp. (strain MR-4)</name>
    <dbReference type="NCBI Taxonomy" id="60480"/>
    <lineage>
        <taxon>Bacteria</taxon>
        <taxon>Pseudomonadati</taxon>
        <taxon>Pseudomonadota</taxon>
        <taxon>Gammaproteobacteria</taxon>
        <taxon>Alteromonadales</taxon>
        <taxon>Shewanellaceae</taxon>
        <taxon>Shewanella</taxon>
    </lineage>
</organism>
<keyword id="KW-0328">Glycosyltransferase</keyword>
<keyword id="KW-0808">Transferase</keyword>
<name>PPNP_SHESM</name>
<proteinExistence type="inferred from homology"/>
<protein>
    <recommendedName>
        <fullName evidence="1">Pyrimidine/purine nucleoside phosphorylase</fullName>
        <ecNumber evidence="1">2.4.2.1</ecNumber>
        <ecNumber evidence="1">2.4.2.2</ecNumber>
    </recommendedName>
    <alternativeName>
        <fullName evidence="1">Adenosine phosphorylase</fullName>
    </alternativeName>
    <alternativeName>
        <fullName evidence="1">Cytidine phosphorylase</fullName>
    </alternativeName>
    <alternativeName>
        <fullName evidence="1">Guanosine phosphorylase</fullName>
    </alternativeName>
    <alternativeName>
        <fullName evidence="1">Inosine phosphorylase</fullName>
    </alternativeName>
    <alternativeName>
        <fullName evidence="1">Thymidine phosphorylase</fullName>
    </alternativeName>
    <alternativeName>
        <fullName evidence="1">Uridine phosphorylase</fullName>
    </alternativeName>
    <alternativeName>
        <fullName evidence="1">Xanthosine phosphorylase</fullName>
    </alternativeName>
</protein>
<gene>
    <name evidence="1" type="primary">ppnP</name>
    <name type="ordered locus">Shewmr4_0262</name>
</gene>
<dbReference type="EC" id="2.4.2.1" evidence="1"/>
<dbReference type="EC" id="2.4.2.2" evidence="1"/>
<dbReference type="EMBL" id="CP000446">
    <property type="protein sequence ID" value="ABI37343.1"/>
    <property type="molecule type" value="Genomic_DNA"/>
</dbReference>
<dbReference type="RefSeq" id="WP_011621070.1">
    <property type="nucleotide sequence ID" value="NC_008321.1"/>
</dbReference>
<dbReference type="SMR" id="Q0HNM4"/>
<dbReference type="KEGG" id="she:Shewmr4_0262"/>
<dbReference type="HOGENOM" id="CLU_157874_1_0_6"/>
<dbReference type="GO" id="GO:0005829">
    <property type="term" value="C:cytosol"/>
    <property type="evidence" value="ECO:0007669"/>
    <property type="project" value="TreeGrafter"/>
</dbReference>
<dbReference type="GO" id="GO:0047975">
    <property type="term" value="F:guanosine phosphorylase activity"/>
    <property type="evidence" value="ECO:0007669"/>
    <property type="project" value="UniProtKB-EC"/>
</dbReference>
<dbReference type="GO" id="GO:0004731">
    <property type="term" value="F:purine-nucleoside phosphorylase activity"/>
    <property type="evidence" value="ECO:0007669"/>
    <property type="project" value="UniProtKB-UniRule"/>
</dbReference>
<dbReference type="GO" id="GO:0009032">
    <property type="term" value="F:thymidine phosphorylase activity"/>
    <property type="evidence" value="ECO:0007669"/>
    <property type="project" value="UniProtKB-EC"/>
</dbReference>
<dbReference type="GO" id="GO:0004850">
    <property type="term" value="F:uridine phosphorylase activity"/>
    <property type="evidence" value="ECO:0007669"/>
    <property type="project" value="UniProtKB-EC"/>
</dbReference>
<dbReference type="CDD" id="cd20296">
    <property type="entry name" value="cupin_PpnP-like"/>
    <property type="match status" value="1"/>
</dbReference>
<dbReference type="FunFam" id="2.60.120.10:FF:000016">
    <property type="entry name" value="Pyrimidine/purine nucleoside phosphorylase"/>
    <property type="match status" value="1"/>
</dbReference>
<dbReference type="Gene3D" id="2.60.120.10">
    <property type="entry name" value="Jelly Rolls"/>
    <property type="match status" value="1"/>
</dbReference>
<dbReference type="HAMAP" id="MF_01537">
    <property type="entry name" value="Nucleos_phosphorylase_PpnP"/>
    <property type="match status" value="1"/>
</dbReference>
<dbReference type="InterPro" id="IPR009664">
    <property type="entry name" value="Ppnp"/>
</dbReference>
<dbReference type="InterPro" id="IPR014710">
    <property type="entry name" value="RmlC-like_jellyroll"/>
</dbReference>
<dbReference type="InterPro" id="IPR011051">
    <property type="entry name" value="RmlC_Cupin_sf"/>
</dbReference>
<dbReference type="PANTHER" id="PTHR36540">
    <property type="entry name" value="PYRIMIDINE/PURINE NUCLEOSIDE PHOSPHORYLASE"/>
    <property type="match status" value="1"/>
</dbReference>
<dbReference type="PANTHER" id="PTHR36540:SF1">
    <property type="entry name" value="PYRIMIDINE_PURINE NUCLEOSIDE PHOSPHORYLASE"/>
    <property type="match status" value="1"/>
</dbReference>
<dbReference type="Pfam" id="PF06865">
    <property type="entry name" value="Ppnp"/>
    <property type="match status" value="1"/>
</dbReference>
<dbReference type="SUPFAM" id="SSF51182">
    <property type="entry name" value="RmlC-like cupins"/>
    <property type="match status" value="1"/>
</dbReference>
<evidence type="ECO:0000255" key="1">
    <source>
        <dbReference type="HAMAP-Rule" id="MF_01537"/>
    </source>
</evidence>